<proteinExistence type="inferred from homology"/>
<feature type="signal peptide" evidence="2">
    <location>
        <begin position="1"/>
        <end position="24"/>
    </location>
</feature>
<feature type="chain" id="PRO_0000034398" description="Uncharacterized lipoprotein MG186">
    <location>
        <begin position="25"/>
        <end position="250"/>
    </location>
</feature>
<feature type="domain" description="TNase-like" evidence="1">
    <location>
        <begin position="44"/>
        <end position="200"/>
    </location>
</feature>
<feature type="lipid moiety-binding region" description="N-palmitoyl cysteine" evidence="2">
    <location>
        <position position="25"/>
    </location>
</feature>
<feature type="lipid moiety-binding region" description="S-diacylglycerol cysteine" evidence="2">
    <location>
        <position position="25"/>
    </location>
</feature>
<protein>
    <recommendedName>
        <fullName>Uncharacterized lipoprotein MG186</fullName>
    </recommendedName>
</protein>
<name>Y186_MYCGE</name>
<accession>P47432</accession>
<comment type="subcellular location">
    <subcellularLocation>
        <location evidence="2">Cell membrane</location>
        <topology evidence="2">Lipid-anchor</topology>
    </subcellularLocation>
</comment>
<evidence type="ECO:0000255" key="1">
    <source>
        <dbReference type="PROSITE-ProRule" id="PRU00272"/>
    </source>
</evidence>
<evidence type="ECO:0000255" key="2">
    <source>
        <dbReference type="PROSITE-ProRule" id="PRU00303"/>
    </source>
</evidence>
<organism>
    <name type="scientific">Mycoplasma genitalium (strain ATCC 33530 / DSM 19775 / NCTC 10195 / G37)</name>
    <name type="common">Mycoplasmoides genitalium</name>
    <dbReference type="NCBI Taxonomy" id="243273"/>
    <lineage>
        <taxon>Bacteria</taxon>
        <taxon>Bacillati</taxon>
        <taxon>Mycoplasmatota</taxon>
        <taxon>Mycoplasmoidales</taxon>
        <taxon>Mycoplasmoidaceae</taxon>
        <taxon>Mycoplasmoides</taxon>
    </lineage>
</organism>
<reference key="1">
    <citation type="journal article" date="1995" name="Science">
        <title>The minimal gene complement of Mycoplasma genitalium.</title>
        <authorList>
            <person name="Fraser C.M."/>
            <person name="Gocayne J.D."/>
            <person name="White O."/>
            <person name="Adams M.D."/>
            <person name="Clayton R.A."/>
            <person name="Fleischmann R.D."/>
            <person name="Bult C.J."/>
            <person name="Kerlavage A.R."/>
            <person name="Sutton G.G."/>
            <person name="Kelley J.M."/>
            <person name="Fritchman J.L."/>
            <person name="Weidman J.F."/>
            <person name="Small K.V."/>
            <person name="Sandusky M."/>
            <person name="Fuhrmann J.L."/>
            <person name="Nguyen D.T."/>
            <person name="Utterback T.R."/>
            <person name="Saudek D.M."/>
            <person name="Phillips C.A."/>
            <person name="Merrick J.M."/>
            <person name="Tomb J.-F."/>
            <person name="Dougherty B.A."/>
            <person name="Bott K.F."/>
            <person name="Hu P.-C."/>
            <person name="Lucier T.S."/>
            <person name="Peterson S.N."/>
            <person name="Smith H.O."/>
            <person name="Hutchison C.A. III"/>
            <person name="Venter J.C."/>
        </authorList>
    </citation>
    <scope>NUCLEOTIDE SEQUENCE [LARGE SCALE GENOMIC DNA]</scope>
    <source>
        <strain>ATCC 33530 / DSM 19775 / NCTC 10195 / G37</strain>
    </source>
</reference>
<keyword id="KW-1003">Cell membrane</keyword>
<keyword id="KW-0255">Endonuclease</keyword>
<keyword id="KW-0378">Hydrolase</keyword>
<keyword id="KW-0449">Lipoprotein</keyword>
<keyword id="KW-0472">Membrane</keyword>
<keyword id="KW-0540">Nuclease</keyword>
<keyword id="KW-0564">Palmitate</keyword>
<keyword id="KW-1185">Reference proteome</keyword>
<keyword id="KW-0732">Signal</keyword>
<sequence>MKGFLKPNFSLGALFLTLSPIATACIAEKPVNNRFNFNSEQLARLRKARVNHWRDGDTLEVSFANNHQKPIRIYAIDTPEKAVLSIQRKSEIELKEANKATEFAKSLIPIGSEVWIWPLNSYSYDREVAAVFFKTNPLQLHFESFAVEMVANGHALPIAGNDFDFVFSDLDPFNPLKIVGIELANGLNNAFNNRKNIFSYLENSFQSITMVYQQRGVDQSWTRYLAPSNDFSSTKLGLGLTIYELKLNNG</sequence>
<dbReference type="EMBL" id="L43967">
    <property type="protein sequence ID" value="AAC71405.1"/>
    <property type="molecule type" value="Genomic_DNA"/>
</dbReference>
<dbReference type="PIR" id="F64220">
    <property type="entry name" value="F64220"/>
</dbReference>
<dbReference type="RefSeq" id="WP_010869364.1">
    <property type="nucleotide sequence ID" value="NC_000908.2"/>
</dbReference>
<dbReference type="SMR" id="P47432"/>
<dbReference type="STRING" id="243273.MG_186"/>
<dbReference type="GeneID" id="88282318"/>
<dbReference type="KEGG" id="mge:MG_186"/>
<dbReference type="eggNOG" id="COG1525">
    <property type="taxonomic scope" value="Bacteria"/>
</dbReference>
<dbReference type="HOGENOM" id="CLU_972608_0_0_14"/>
<dbReference type="InParanoid" id="P47432"/>
<dbReference type="OrthoDB" id="395390at2"/>
<dbReference type="BioCyc" id="MGEN243273:G1GJ2-214-MONOMER"/>
<dbReference type="Proteomes" id="UP000000807">
    <property type="component" value="Chromosome"/>
</dbReference>
<dbReference type="GO" id="GO:0005886">
    <property type="term" value="C:plasma membrane"/>
    <property type="evidence" value="ECO:0007669"/>
    <property type="project" value="UniProtKB-SubCell"/>
</dbReference>
<dbReference type="GO" id="GO:0004519">
    <property type="term" value="F:endonuclease activity"/>
    <property type="evidence" value="ECO:0007669"/>
    <property type="project" value="UniProtKB-KW"/>
</dbReference>
<dbReference type="GO" id="GO:0003676">
    <property type="term" value="F:nucleic acid binding"/>
    <property type="evidence" value="ECO:0007669"/>
    <property type="project" value="InterPro"/>
</dbReference>
<dbReference type="CDD" id="cd00175">
    <property type="entry name" value="SNc"/>
    <property type="match status" value="1"/>
</dbReference>
<dbReference type="Gene3D" id="2.40.50.90">
    <property type="match status" value="1"/>
</dbReference>
<dbReference type="InterPro" id="IPR035437">
    <property type="entry name" value="SNase_OB-fold_sf"/>
</dbReference>
<dbReference type="InterPro" id="IPR016071">
    <property type="entry name" value="Staphylococal_nuclease_OB-fold"/>
</dbReference>
<dbReference type="InterPro" id="IPR002071">
    <property type="entry name" value="Thermonucl_AS"/>
</dbReference>
<dbReference type="SMART" id="SM00318">
    <property type="entry name" value="SNc"/>
    <property type="match status" value="1"/>
</dbReference>
<dbReference type="SUPFAM" id="SSF50199">
    <property type="entry name" value="Staphylococcal nuclease"/>
    <property type="match status" value="1"/>
</dbReference>
<dbReference type="PROSITE" id="PS51257">
    <property type="entry name" value="PROKAR_LIPOPROTEIN"/>
    <property type="match status" value="1"/>
</dbReference>
<dbReference type="PROSITE" id="PS01123">
    <property type="entry name" value="TNASE_1"/>
    <property type="match status" value="1"/>
</dbReference>
<dbReference type="PROSITE" id="PS50830">
    <property type="entry name" value="TNASE_3"/>
    <property type="match status" value="1"/>
</dbReference>
<gene>
    <name type="ordered locus">MG186</name>
</gene>